<keyword id="KW-0687">Ribonucleoprotein</keyword>
<keyword id="KW-0689">Ribosomal protein</keyword>
<keyword id="KW-0694">RNA-binding</keyword>
<keyword id="KW-0699">rRNA-binding</keyword>
<gene>
    <name evidence="1" type="primary">rpsF</name>
    <name type="ordered locus">BF3632</name>
</gene>
<sequence length="114" mass="13413">MNQYETVFILTPVLSDVQMKEAVEKFKGILQAEGAEIINEENWGLKKLAYPIQKKSTGFYQLIEFNAEPTVIDKLELNFRRDERVIRFLTFRMDKYAAEYAAKRRSVKSNKKED</sequence>
<dbReference type="EMBL" id="CR626927">
    <property type="protein sequence ID" value="CAH09313.1"/>
    <property type="molecule type" value="Genomic_DNA"/>
</dbReference>
<dbReference type="RefSeq" id="WP_005781453.1">
    <property type="nucleotide sequence ID" value="NZ_UFTH01000001.1"/>
</dbReference>
<dbReference type="SMR" id="Q5L9B5"/>
<dbReference type="PaxDb" id="272559-BF9343_3532"/>
<dbReference type="GeneID" id="93105003"/>
<dbReference type="KEGG" id="bfs:BF9343_3532"/>
<dbReference type="eggNOG" id="COG0360">
    <property type="taxonomic scope" value="Bacteria"/>
</dbReference>
<dbReference type="HOGENOM" id="CLU_113441_4_3_10"/>
<dbReference type="Proteomes" id="UP000006731">
    <property type="component" value="Chromosome"/>
</dbReference>
<dbReference type="GO" id="GO:0005737">
    <property type="term" value="C:cytoplasm"/>
    <property type="evidence" value="ECO:0007669"/>
    <property type="project" value="UniProtKB-ARBA"/>
</dbReference>
<dbReference type="GO" id="GO:1990904">
    <property type="term" value="C:ribonucleoprotein complex"/>
    <property type="evidence" value="ECO:0007669"/>
    <property type="project" value="UniProtKB-KW"/>
</dbReference>
<dbReference type="GO" id="GO:0005840">
    <property type="term" value="C:ribosome"/>
    <property type="evidence" value="ECO:0007669"/>
    <property type="project" value="UniProtKB-KW"/>
</dbReference>
<dbReference type="GO" id="GO:0070181">
    <property type="term" value="F:small ribosomal subunit rRNA binding"/>
    <property type="evidence" value="ECO:0007669"/>
    <property type="project" value="TreeGrafter"/>
</dbReference>
<dbReference type="GO" id="GO:0003735">
    <property type="term" value="F:structural constituent of ribosome"/>
    <property type="evidence" value="ECO:0007669"/>
    <property type="project" value="InterPro"/>
</dbReference>
<dbReference type="GO" id="GO:0006412">
    <property type="term" value="P:translation"/>
    <property type="evidence" value="ECO:0007669"/>
    <property type="project" value="UniProtKB-UniRule"/>
</dbReference>
<dbReference type="CDD" id="cd00473">
    <property type="entry name" value="bS6"/>
    <property type="match status" value="1"/>
</dbReference>
<dbReference type="FunFam" id="3.30.70.60:FF:000011">
    <property type="entry name" value="30S ribosomal protein S6"/>
    <property type="match status" value="1"/>
</dbReference>
<dbReference type="Gene3D" id="3.30.70.60">
    <property type="match status" value="1"/>
</dbReference>
<dbReference type="HAMAP" id="MF_00360">
    <property type="entry name" value="Ribosomal_bS6"/>
    <property type="match status" value="1"/>
</dbReference>
<dbReference type="InterPro" id="IPR000529">
    <property type="entry name" value="Ribosomal_bS6"/>
</dbReference>
<dbReference type="InterPro" id="IPR035980">
    <property type="entry name" value="Ribosomal_bS6_sf"/>
</dbReference>
<dbReference type="InterPro" id="IPR020814">
    <property type="entry name" value="Ribosomal_S6_plastid/chlpt"/>
</dbReference>
<dbReference type="InterPro" id="IPR014717">
    <property type="entry name" value="Transl_elong_EF1B/ribsomal_bS6"/>
</dbReference>
<dbReference type="NCBIfam" id="TIGR00166">
    <property type="entry name" value="S6"/>
    <property type="match status" value="1"/>
</dbReference>
<dbReference type="PANTHER" id="PTHR21011">
    <property type="entry name" value="MITOCHONDRIAL 28S RIBOSOMAL PROTEIN S6"/>
    <property type="match status" value="1"/>
</dbReference>
<dbReference type="PANTHER" id="PTHR21011:SF1">
    <property type="entry name" value="SMALL RIBOSOMAL SUBUNIT PROTEIN BS6M"/>
    <property type="match status" value="1"/>
</dbReference>
<dbReference type="Pfam" id="PF01250">
    <property type="entry name" value="Ribosomal_S6"/>
    <property type="match status" value="1"/>
</dbReference>
<dbReference type="SUPFAM" id="SSF54995">
    <property type="entry name" value="Ribosomal protein S6"/>
    <property type="match status" value="1"/>
</dbReference>
<protein>
    <recommendedName>
        <fullName evidence="1">Small ribosomal subunit protein bS6</fullName>
    </recommendedName>
    <alternativeName>
        <fullName evidence="2">30S ribosomal protein S6</fullName>
    </alternativeName>
</protein>
<accession>Q5L9B5</accession>
<feature type="chain" id="PRO_0000229524" description="Small ribosomal subunit protein bS6">
    <location>
        <begin position="1"/>
        <end position="114"/>
    </location>
</feature>
<organism>
    <name type="scientific">Bacteroides fragilis (strain ATCC 25285 / DSM 2151 / CCUG 4856 / JCM 11019 / LMG 10263 / NCTC 9343 / Onslow / VPI 2553 / EN-2)</name>
    <dbReference type="NCBI Taxonomy" id="272559"/>
    <lineage>
        <taxon>Bacteria</taxon>
        <taxon>Pseudomonadati</taxon>
        <taxon>Bacteroidota</taxon>
        <taxon>Bacteroidia</taxon>
        <taxon>Bacteroidales</taxon>
        <taxon>Bacteroidaceae</taxon>
        <taxon>Bacteroides</taxon>
    </lineage>
</organism>
<proteinExistence type="inferred from homology"/>
<evidence type="ECO:0000255" key="1">
    <source>
        <dbReference type="HAMAP-Rule" id="MF_00360"/>
    </source>
</evidence>
<evidence type="ECO:0000305" key="2"/>
<name>RS6_BACFN</name>
<comment type="function">
    <text evidence="1">Binds together with bS18 to 16S ribosomal RNA.</text>
</comment>
<comment type="similarity">
    <text evidence="1">Belongs to the bacterial ribosomal protein bS6 family.</text>
</comment>
<reference key="1">
    <citation type="journal article" date="2005" name="Science">
        <title>Extensive DNA inversions in the B. fragilis genome control variable gene expression.</title>
        <authorList>
            <person name="Cerdeno-Tarraga A.-M."/>
            <person name="Patrick S."/>
            <person name="Crossman L.C."/>
            <person name="Blakely G."/>
            <person name="Abratt V."/>
            <person name="Lennard N."/>
            <person name="Poxton I."/>
            <person name="Duerden B."/>
            <person name="Harris B."/>
            <person name="Quail M.A."/>
            <person name="Barron A."/>
            <person name="Clark L."/>
            <person name="Corton C."/>
            <person name="Doggett J."/>
            <person name="Holden M.T.G."/>
            <person name="Larke N."/>
            <person name="Line A."/>
            <person name="Lord A."/>
            <person name="Norbertczak H."/>
            <person name="Ormond D."/>
            <person name="Price C."/>
            <person name="Rabbinowitsch E."/>
            <person name="Woodward J."/>
            <person name="Barrell B.G."/>
            <person name="Parkhill J."/>
        </authorList>
    </citation>
    <scope>NUCLEOTIDE SEQUENCE [LARGE SCALE GENOMIC DNA]</scope>
    <source>
        <strain>ATCC 25285 / DSM 2151 / CCUG 4856 / JCM 11019 / LMG 10263 / NCTC 9343 / Onslow / VPI 2553 / EN-2</strain>
    </source>
</reference>